<feature type="chain" id="PRO_0000117663" description="NAD(P)H-quinone oxidoreductase subunit 2 A, chloroplastic">
    <location>
        <begin position="1"/>
        <end position="510"/>
    </location>
</feature>
<feature type="transmembrane region" description="Helical" evidence="1">
    <location>
        <begin position="24"/>
        <end position="44"/>
    </location>
</feature>
<feature type="transmembrane region" description="Helical" evidence="1">
    <location>
        <begin position="59"/>
        <end position="79"/>
    </location>
</feature>
<feature type="transmembrane region" description="Helical" evidence="1">
    <location>
        <begin position="99"/>
        <end position="119"/>
    </location>
</feature>
<feature type="transmembrane region" description="Helical" evidence="1">
    <location>
        <begin position="124"/>
        <end position="144"/>
    </location>
</feature>
<feature type="transmembrane region" description="Helical" evidence="1">
    <location>
        <begin position="149"/>
        <end position="169"/>
    </location>
</feature>
<feature type="transmembrane region" description="Helical" evidence="1">
    <location>
        <begin position="184"/>
        <end position="204"/>
    </location>
</feature>
<feature type="transmembrane region" description="Helical" evidence="1">
    <location>
        <begin position="229"/>
        <end position="249"/>
    </location>
</feature>
<feature type="transmembrane region" description="Helical" evidence="1">
    <location>
        <begin position="261"/>
        <end position="281"/>
    </location>
</feature>
<feature type="transmembrane region" description="Helical" evidence="1">
    <location>
        <begin position="295"/>
        <end position="315"/>
    </location>
</feature>
<feature type="transmembrane region" description="Helical" evidence="1">
    <location>
        <begin position="323"/>
        <end position="343"/>
    </location>
</feature>
<feature type="transmembrane region" description="Helical" evidence="1">
    <location>
        <begin position="354"/>
        <end position="374"/>
    </location>
</feature>
<feature type="transmembrane region" description="Helical" evidence="1">
    <location>
        <begin position="395"/>
        <end position="415"/>
    </location>
</feature>
<feature type="transmembrane region" description="Helical" evidence="1">
    <location>
        <begin position="418"/>
        <end position="438"/>
    </location>
</feature>
<feature type="transmembrane region" description="Helical" evidence="1">
    <location>
        <begin position="484"/>
        <end position="504"/>
    </location>
</feature>
<geneLocation type="chloroplast"/>
<proteinExistence type="evidence at transcript level"/>
<sequence>MIWHVQNENFILDSTRIFMKAFHLLLFHGSFIFPECILIFGLILLLMIDLTSDQKDRPWFYFISSTSLVISITALLFRWREEPIISFSGNFQTNNFNEIFQFLILLCSTLCIPLSVEYIECTEMAITEFLLFVLTATLGGMFLCGANDLITIFVALECFSLCSYLLSGYTKRDLRSNEATMKYLLMGGASSSILVYGFSWLYGLSGGEIELQEIVNGLINTQMYNSPGISIALIFITVGLGFKLSLAPFHQWTPDVYEGSPTPVVAFLSVTSKVAALALATRILDIPFYFSSNEWHLLLEILAILSMILGNLLAITQTSMKRMLAYSSIGQIGYVIIGIIVGDSNDGYASMITYMLFYISMNLGTFACIVLFGLRTGTDNIRDYAGLYTKDPFLALSLALCLLSLGGLPPLAGFFGKLYLFWCGWQAGLYFLVSIGLLTSVLSIYYYLKIIKLLMTGRNQEITPYVRNYRRSPLRSNNSIELSMTVCVIASTILGISMNPILAIAQDTLF</sequence>
<keyword id="KW-0150">Chloroplast</keyword>
<keyword id="KW-0472">Membrane</keyword>
<keyword id="KW-0520">NAD</keyword>
<keyword id="KW-0521">NADP</keyword>
<keyword id="KW-0934">Plastid</keyword>
<keyword id="KW-0618">Plastoquinone</keyword>
<keyword id="KW-0874">Quinone</keyword>
<keyword id="KW-1185">Reference proteome</keyword>
<keyword id="KW-0691">RNA editing</keyword>
<keyword id="KW-0793">Thylakoid</keyword>
<keyword id="KW-1278">Translocase</keyword>
<keyword id="KW-0812">Transmembrane</keyword>
<keyword id="KW-1133">Transmembrane helix</keyword>
<keyword id="KW-0813">Transport</keyword>
<name>NU2C1_MAIZE</name>
<comment type="function">
    <text evidence="1">NDH shuttles electrons from NAD(P)H:plastoquinone, via FMN and iron-sulfur (Fe-S) centers, to quinones in the photosynthetic chain and possibly in a chloroplast respiratory chain. The immediate electron acceptor for the enzyme in this species is believed to be plastoquinone. Couples the redox reaction to proton translocation, and thus conserves the redox energy in a proton gradient.</text>
</comment>
<comment type="catalytic activity">
    <reaction evidence="1">
        <text>a plastoquinone + NADH + (n+1) H(+)(in) = a plastoquinol + NAD(+) + n H(+)(out)</text>
        <dbReference type="Rhea" id="RHEA:42608"/>
        <dbReference type="Rhea" id="RHEA-COMP:9561"/>
        <dbReference type="Rhea" id="RHEA-COMP:9562"/>
        <dbReference type="ChEBI" id="CHEBI:15378"/>
        <dbReference type="ChEBI" id="CHEBI:17757"/>
        <dbReference type="ChEBI" id="CHEBI:57540"/>
        <dbReference type="ChEBI" id="CHEBI:57945"/>
        <dbReference type="ChEBI" id="CHEBI:62192"/>
    </reaction>
</comment>
<comment type="catalytic activity">
    <reaction evidence="1">
        <text>a plastoquinone + NADPH + (n+1) H(+)(in) = a plastoquinol + NADP(+) + n H(+)(out)</text>
        <dbReference type="Rhea" id="RHEA:42612"/>
        <dbReference type="Rhea" id="RHEA-COMP:9561"/>
        <dbReference type="Rhea" id="RHEA-COMP:9562"/>
        <dbReference type="ChEBI" id="CHEBI:15378"/>
        <dbReference type="ChEBI" id="CHEBI:17757"/>
        <dbReference type="ChEBI" id="CHEBI:57783"/>
        <dbReference type="ChEBI" id="CHEBI:58349"/>
        <dbReference type="ChEBI" id="CHEBI:62192"/>
    </reaction>
</comment>
<comment type="subunit">
    <text evidence="1">NDH is composed of at least 16 different subunits, 5 of which are encoded in the nucleus.</text>
</comment>
<comment type="subcellular location">
    <subcellularLocation>
        <location evidence="1">Plastid</location>
        <location evidence="1">Chloroplast thylakoid membrane</location>
        <topology evidence="1">Multi-pass membrane protein</topology>
    </subcellularLocation>
</comment>
<comment type="RNA editing">
    <location>
        <position position="156" evidence="2"/>
    </location>
    <location>
        <position position="196" evidence="2"/>
    </location>
    <location>
        <position position="204" evidence="2"/>
    </location>
    <location>
        <position position="246" evidence="2"/>
    </location>
    <location>
        <position position="277" evidence="2"/>
    </location>
    <location>
        <position position="494" evidence="2"/>
    </location>
</comment>
<comment type="similarity">
    <text evidence="1">Belongs to the complex I subunit 2 family.</text>
</comment>
<organism>
    <name type="scientific">Zea mays</name>
    <name type="common">Maize</name>
    <dbReference type="NCBI Taxonomy" id="4577"/>
    <lineage>
        <taxon>Eukaryota</taxon>
        <taxon>Viridiplantae</taxon>
        <taxon>Streptophyta</taxon>
        <taxon>Embryophyta</taxon>
        <taxon>Tracheophyta</taxon>
        <taxon>Spermatophyta</taxon>
        <taxon>Magnoliopsida</taxon>
        <taxon>Liliopsida</taxon>
        <taxon>Poales</taxon>
        <taxon>Poaceae</taxon>
        <taxon>PACMAD clade</taxon>
        <taxon>Panicoideae</taxon>
        <taxon>Andropogonodae</taxon>
        <taxon>Andropogoneae</taxon>
        <taxon>Tripsacinae</taxon>
        <taxon>Zea</taxon>
    </lineage>
</organism>
<reference key="1">
    <citation type="journal article" date="1992" name="Nucleic Acids Res.">
        <title>Identification of editing positions in the ndhB transcript from maize chloroplasts reveals sequence similarities between editing sites of chloroplasts and plant mitochondria.</title>
        <authorList>
            <person name="Maier R.M."/>
            <person name="Neckermann K."/>
            <person name="Hoch B."/>
            <person name="Akhmedov N.B."/>
            <person name="Koessel H."/>
        </authorList>
    </citation>
    <scope>NUCLEOTIDE SEQUENCE [LARGE SCALE GENOMIC DNA]</scope>
    <scope>RNA EDITING</scope>
    <source>
        <strain>cv. B73</strain>
    </source>
</reference>
<reference key="2">
    <citation type="journal article" date="1995" name="J. Mol. Biol.">
        <title>Complete sequence of the maize chloroplast genome: gene content, hotspots of divergence and fine tuning of genetic information by transcript editing.</title>
        <authorList>
            <person name="Maier R.M."/>
            <person name="Neckermann K."/>
            <person name="Igloi G.L."/>
            <person name="Koessel H."/>
        </authorList>
    </citation>
    <scope>NUCLEOTIDE SEQUENCE [LARGE SCALE GENOMIC DNA]</scope>
    <source>
        <strain>cv. B73</strain>
    </source>
</reference>
<dbReference type="EC" id="7.1.1.-" evidence="1"/>
<dbReference type="EMBL" id="X86563">
    <property type="protein sequence ID" value="CAA60338.1"/>
    <property type="status" value="ALT_SEQ"/>
    <property type="molecule type" value="Genomic_DNA"/>
</dbReference>
<dbReference type="PIR" id="S38992">
    <property type="entry name" value="S38992"/>
</dbReference>
<dbReference type="SMR" id="P0CD58"/>
<dbReference type="FunCoup" id="P0CD58">
    <property type="interactions" value="14"/>
</dbReference>
<dbReference type="STRING" id="4577.P0CD58"/>
<dbReference type="PaxDb" id="4577-GRMZM2G383052_P02"/>
<dbReference type="KEGG" id="zma:845180"/>
<dbReference type="KEGG" id="zma:845181"/>
<dbReference type="MaizeGDB" id="105929"/>
<dbReference type="eggNOG" id="KOG4668">
    <property type="taxonomic scope" value="Eukaryota"/>
</dbReference>
<dbReference type="InParanoid" id="P0CD58"/>
<dbReference type="OrthoDB" id="783395at2759"/>
<dbReference type="Proteomes" id="UP000007305">
    <property type="component" value="Chloroplast"/>
</dbReference>
<dbReference type="ExpressionAtlas" id="P0CD58">
    <property type="expression patterns" value="baseline"/>
</dbReference>
<dbReference type="GO" id="GO:0009535">
    <property type="term" value="C:chloroplast thylakoid membrane"/>
    <property type="evidence" value="ECO:0007669"/>
    <property type="project" value="UniProtKB-SubCell"/>
</dbReference>
<dbReference type="GO" id="GO:0008137">
    <property type="term" value="F:NADH dehydrogenase (ubiquinone) activity"/>
    <property type="evidence" value="ECO:0007669"/>
    <property type="project" value="InterPro"/>
</dbReference>
<dbReference type="GO" id="GO:0048038">
    <property type="term" value="F:quinone binding"/>
    <property type="evidence" value="ECO:0007669"/>
    <property type="project" value="UniProtKB-KW"/>
</dbReference>
<dbReference type="GO" id="GO:0042773">
    <property type="term" value="P:ATP synthesis coupled electron transport"/>
    <property type="evidence" value="ECO:0007669"/>
    <property type="project" value="InterPro"/>
</dbReference>
<dbReference type="GO" id="GO:0019684">
    <property type="term" value="P:photosynthesis, light reaction"/>
    <property type="evidence" value="ECO:0007669"/>
    <property type="project" value="UniProtKB-UniRule"/>
</dbReference>
<dbReference type="HAMAP" id="MF_00445">
    <property type="entry name" value="NDH1_NuoN_1"/>
    <property type="match status" value="1"/>
</dbReference>
<dbReference type="InterPro" id="IPR010096">
    <property type="entry name" value="NADH-Q_OxRdtase_suN/2"/>
</dbReference>
<dbReference type="InterPro" id="IPR001750">
    <property type="entry name" value="ND/Mrp_TM"/>
</dbReference>
<dbReference type="InterPro" id="IPR045693">
    <property type="entry name" value="Ndh2_N"/>
</dbReference>
<dbReference type="NCBIfam" id="TIGR01770">
    <property type="entry name" value="NDH_I_N"/>
    <property type="match status" value="1"/>
</dbReference>
<dbReference type="NCBIfam" id="NF002701">
    <property type="entry name" value="PRK02504.1"/>
    <property type="match status" value="1"/>
</dbReference>
<dbReference type="PANTHER" id="PTHR22773">
    <property type="entry name" value="NADH DEHYDROGENASE"/>
    <property type="match status" value="1"/>
</dbReference>
<dbReference type="Pfam" id="PF19530">
    <property type="entry name" value="Ndh2_N"/>
    <property type="match status" value="1"/>
</dbReference>
<dbReference type="Pfam" id="PF00361">
    <property type="entry name" value="Proton_antipo_M"/>
    <property type="match status" value="1"/>
</dbReference>
<dbReference type="PRINTS" id="PR01434">
    <property type="entry name" value="NADHDHGNASE5"/>
</dbReference>
<accession>P0CD58</accession>
<accession>P46619</accession>
<gene>
    <name evidence="1" type="primary">ndhB1</name>
    <name type="synonym">ndh2-A</name>
</gene>
<protein>
    <recommendedName>
        <fullName evidence="1">NAD(P)H-quinone oxidoreductase subunit 2 A, chloroplastic</fullName>
        <ecNumber evidence="1">7.1.1.-</ecNumber>
    </recommendedName>
    <alternativeName>
        <fullName evidence="1">NAD(P)H dehydrogenase, subunit 2 A</fullName>
    </alternativeName>
    <alternativeName>
        <fullName evidence="1">NADH-plastoquinone oxidoreductase subunit 2 A</fullName>
    </alternativeName>
</protein>
<evidence type="ECO:0000255" key="1">
    <source>
        <dbReference type="HAMAP-Rule" id="MF_00445"/>
    </source>
</evidence>
<evidence type="ECO:0000269" key="2">
    <source>
    </source>
</evidence>